<comment type="function">
    <text evidence="1">Involved in the early part of the secretory pathway.</text>
</comment>
<comment type="subcellular location">
    <subcellularLocation>
        <location evidence="1">Golgi apparatus membrane</location>
        <topology evidence="1">Single-pass type I membrane protein</topology>
    </subcellularLocation>
</comment>
<comment type="similarity">
    <text evidence="3">Belongs to the KISH family.</text>
</comment>
<accession>Q148I3</accession>
<reference key="1">
    <citation type="submission" date="2006-06" db="EMBL/GenBank/DDBJ databases">
        <authorList>
            <consortium name="NIH - Mammalian Gene Collection (MGC) project"/>
        </authorList>
    </citation>
    <scope>NUCLEOTIDE SEQUENCE [LARGE SCALE MRNA]</scope>
    <source>
        <strain>Hereford</strain>
        <tissue>Basal ganglia</tissue>
    </source>
</reference>
<organism>
    <name type="scientific">Bos taurus</name>
    <name type="common">Bovine</name>
    <dbReference type="NCBI Taxonomy" id="9913"/>
    <lineage>
        <taxon>Eukaryota</taxon>
        <taxon>Metazoa</taxon>
        <taxon>Chordata</taxon>
        <taxon>Craniata</taxon>
        <taxon>Vertebrata</taxon>
        <taxon>Euteleostomi</taxon>
        <taxon>Mammalia</taxon>
        <taxon>Eutheria</taxon>
        <taxon>Laurasiatheria</taxon>
        <taxon>Artiodactyla</taxon>
        <taxon>Ruminantia</taxon>
        <taxon>Pecora</taxon>
        <taxon>Bovidae</taxon>
        <taxon>Bovinae</taxon>
        <taxon>Bos</taxon>
    </lineage>
</organism>
<name>KISHA_BOVIN</name>
<keyword id="KW-0325">Glycoprotein</keyword>
<keyword id="KW-0333">Golgi apparatus</keyword>
<keyword id="KW-0472">Membrane</keyword>
<keyword id="KW-1185">Reference proteome</keyword>
<keyword id="KW-0732">Signal</keyword>
<keyword id="KW-0812">Transmembrane</keyword>
<keyword id="KW-1133">Transmembrane helix</keyword>
<protein>
    <recommendedName>
        <fullName>Protein kish-A</fullName>
    </recommendedName>
    <alternativeName>
        <fullName>Transmembrane protein 167A</fullName>
    </alternativeName>
</protein>
<sequence>MSAIFNFQSLLTVILLLICTCAYIRSLAPSLLDRNKTGLLGIFWKCARIGERKSPYVAVCCIVMAFSILFIQ</sequence>
<feature type="signal peptide" evidence="2">
    <location>
        <begin position="1"/>
        <end position="26"/>
    </location>
</feature>
<feature type="chain" id="PRO_0000367272" description="Protein kish-A">
    <location>
        <begin position="27"/>
        <end position="72"/>
    </location>
</feature>
<feature type="topological domain" description="Extracellular" evidence="2">
    <location>
        <begin position="27"/>
        <end position="53"/>
    </location>
</feature>
<feature type="transmembrane region" description="Helical" evidence="2">
    <location>
        <begin position="54"/>
        <end position="71"/>
    </location>
</feature>
<feature type="topological domain" description="Cytoplasmic" evidence="2">
    <location>
        <position position="72"/>
    </location>
</feature>
<feature type="glycosylation site" description="N-linked (GlcNAc...) asparagine" evidence="2">
    <location>
        <position position="35"/>
    </location>
</feature>
<dbReference type="EMBL" id="BC118303">
    <property type="protein sequence ID" value="AAI18304.1"/>
    <property type="molecule type" value="mRNA"/>
</dbReference>
<dbReference type="RefSeq" id="NP_001107983.1">
    <property type="nucleotide sequence ID" value="NM_001114511.1"/>
</dbReference>
<dbReference type="FunCoup" id="Q148I3">
    <property type="interactions" value="2369"/>
</dbReference>
<dbReference type="STRING" id="9913.ENSBTAP00000053007"/>
<dbReference type="GlyCosmos" id="Q148I3">
    <property type="glycosylation" value="1 site, No reported glycans"/>
</dbReference>
<dbReference type="GlyGen" id="Q148I3">
    <property type="glycosylation" value="1 site"/>
</dbReference>
<dbReference type="PaxDb" id="9913-ENSBTAP00000053007"/>
<dbReference type="GeneID" id="613669"/>
<dbReference type="KEGG" id="bta:613669"/>
<dbReference type="CTD" id="153339"/>
<dbReference type="VEuPathDB" id="HostDB:ENSBTAG00000039591"/>
<dbReference type="eggNOG" id="KOG3808">
    <property type="taxonomic scope" value="Eukaryota"/>
</dbReference>
<dbReference type="HOGENOM" id="CLU_152663_1_1_1"/>
<dbReference type="InParanoid" id="Q148I3"/>
<dbReference type="OMA" id="KVGFQGT"/>
<dbReference type="OrthoDB" id="10034655at2759"/>
<dbReference type="TreeFam" id="TF300138"/>
<dbReference type="Proteomes" id="UP000009136">
    <property type="component" value="Chromosome 7"/>
</dbReference>
<dbReference type="Bgee" id="ENSBTAG00000039591">
    <property type="expression patterns" value="Expressed in oocyte and 110 other cell types or tissues"/>
</dbReference>
<dbReference type="GO" id="GO:0000139">
    <property type="term" value="C:Golgi membrane"/>
    <property type="evidence" value="ECO:0007669"/>
    <property type="project" value="UniProtKB-SubCell"/>
</dbReference>
<dbReference type="GO" id="GO:0046907">
    <property type="term" value="P:intracellular transport"/>
    <property type="evidence" value="ECO:0000318"/>
    <property type="project" value="GO_Central"/>
</dbReference>
<dbReference type="GO" id="GO:0009306">
    <property type="term" value="P:protein secretion"/>
    <property type="evidence" value="ECO:0000318"/>
    <property type="project" value="GO_Central"/>
</dbReference>
<dbReference type="InterPro" id="IPR051523">
    <property type="entry name" value="KISH_domain"/>
</dbReference>
<dbReference type="InterPro" id="IPR009653">
    <property type="entry name" value="Ksh1"/>
</dbReference>
<dbReference type="PANTHER" id="PTHR13229">
    <property type="entry name" value="PROTEIN KISH-A"/>
    <property type="match status" value="1"/>
</dbReference>
<dbReference type="Pfam" id="PF06842">
    <property type="entry name" value="DUF1242"/>
    <property type="match status" value="1"/>
</dbReference>
<evidence type="ECO:0000250" key="1"/>
<evidence type="ECO:0000255" key="2"/>
<evidence type="ECO:0000305" key="3"/>
<proteinExistence type="inferred from homology"/>
<gene>
    <name type="primary">TMEM167A</name>
</gene>